<evidence type="ECO:0000255" key="1">
    <source>
        <dbReference type="HAMAP-Rule" id="MF_01007"/>
    </source>
</evidence>
<organism>
    <name type="scientific">Clostridium botulinum (strain Alaska E43 / Type E3)</name>
    <dbReference type="NCBI Taxonomy" id="508767"/>
    <lineage>
        <taxon>Bacteria</taxon>
        <taxon>Bacillati</taxon>
        <taxon>Bacillota</taxon>
        <taxon>Clostridia</taxon>
        <taxon>Eubacteriales</taxon>
        <taxon>Clostridiaceae</taxon>
        <taxon>Clostridium</taxon>
    </lineage>
</organism>
<feature type="chain" id="PRO_0000386811" description="Ribosomal RNA small subunit methyltransferase H">
    <location>
        <begin position="1"/>
        <end position="310"/>
    </location>
</feature>
<feature type="binding site" evidence="1">
    <location>
        <begin position="33"/>
        <end position="35"/>
    </location>
    <ligand>
        <name>S-adenosyl-L-methionine</name>
        <dbReference type="ChEBI" id="CHEBI:59789"/>
    </ligand>
</feature>
<feature type="binding site" evidence="1">
    <location>
        <position position="53"/>
    </location>
    <ligand>
        <name>S-adenosyl-L-methionine</name>
        <dbReference type="ChEBI" id="CHEBI:59789"/>
    </ligand>
</feature>
<feature type="binding site" evidence="1">
    <location>
        <position position="79"/>
    </location>
    <ligand>
        <name>S-adenosyl-L-methionine</name>
        <dbReference type="ChEBI" id="CHEBI:59789"/>
    </ligand>
</feature>
<feature type="binding site" evidence="1">
    <location>
        <position position="100"/>
    </location>
    <ligand>
        <name>S-adenosyl-L-methionine</name>
        <dbReference type="ChEBI" id="CHEBI:59789"/>
    </ligand>
</feature>
<feature type="binding site" evidence="1">
    <location>
        <position position="107"/>
    </location>
    <ligand>
        <name>S-adenosyl-L-methionine</name>
        <dbReference type="ChEBI" id="CHEBI:59789"/>
    </ligand>
</feature>
<accession>B2V4W0</accession>
<sequence length="310" mass="35514">MEFKHISVLLNECLDALDIKDNGIYVDCTLGGAGHSSHILERLSNEGLLIGIDQDRDALKAAKERLKRFENVKYVHSNFYDIDNILQNLDIPKVDGILMDLGVSSYQLDEGARGFSYMKDAPLDMRMNRDNDFSAYEIVNEYSEDELYKIIRNYGEERFAKRISNCIVNRRSDKPIETTMELVDIIKAAIPAKARREGPHPAKRTFQAIRIEVNSELKILNQTIEDGVNRLKPGGRMAIITFHSLEDRIVKLKFRELNDPCTCPREFPMCICGKKPSVRLVSRKGIEPTKEEVEENPRSRSAKLRIIEKL</sequence>
<name>RSMH_CLOBA</name>
<keyword id="KW-0963">Cytoplasm</keyword>
<keyword id="KW-0489">Methyltransferase</keyword>
<keyword id="KW-0698">rRNA processing</keyword>
<keyword id="KW-0949">S-adenosyl-L-methionine</keyword>
<keyword id="KW-0808">Transferase</keyword>
<protein>
    <recommendedName>
        <fullName evidence="1">Ribosomal RNA small subunit methyltransferase H</fullName>
        <ecNumber evidence="1">2.1.1.199</ecNumber>
    </recommendedName>
    <alternativeName>
        <fullName evidence="1">16S rRNA m(4)C1402 methyltransferase</fullName>
    </alternativeName>
    <alternativeName>
        <fullName evidence="1">rRNA (cytosine-N(4)-)-methyltransferase RsmH</fullName>
    </alternativeName>
</protein>
<proteinExistence type="inferred from homology"/>
<reference key="1">
    <citation type="submission" date="2008-05" db="EMBL/GenBank/DDBJ databases">
        <title>Complete genome sequence of Clostridium botulinum E3 str. Alaska E43.</title>
        <authorList>
            <person name="Brinkac L.M."/>
            <person name="Brown J.L."/>
            <person name="Bruce D."/>
            <person name="Detter C."/>
            <person name="Munk C."/>
            <person name="Smith L.A."/>
            <person name="Smith T.J."/>
            <person name="Sutton G."/>
            <person name="Brettin T.S."/>
        </authorList>
    </citation>
    <scope>NUCLEOTIDE SEQUENCE [LARGE SCALE GENOMIC DNA]</scope>
    <source>
        <strain>Alaska E43 / Type E3</strain>
    </source>
</reference>
<dbReference type="EC" id="2.1.1.199" evidence="1"/>
<dbReference type="EMBL" id="CP001078">
    <property type="protein sequence ID" value="ACD51171.1"/>
    <property type="molecule type" value="Genomic_DNA"/>
</dbReference>
<dbReference type="RefSeq" id="WP_003369055.1">
    <property type="nucleotide sequence ID" value="NC_010723.1"/>
</dbReference>
<dbReference type="SMR" id="B2V4W0"/>
<dbReference type="KEGG" id="cbt:CLH_2213"/>
<dbReference type="HOGENOM" id="CLU_038422_2_0_9"/>
<dbReference type="GO" id="GO:0005737">
    <property type="term" value="C:cytoplasm"/>
    <property type="evidence" value="ECO:0007669"/>
    <property type="project" value="UniProtKB-SubCell"/>
</dbReference>
<dbReference type="GO" id="GO:0071424">
    <property type="term" value="F:rRNA (cytosine-N4-)-methyltransferase activity"/>
    <property type="evidence" value="ECO:0007669"/>
    <property type="project" value="UniProtKB-UniRule"/>
</dbReference>
<dbReference type="GO" id="GO:0070475">
    <property type="term" value="P:rRNA base methylation"/>
    <property type="evidence" value="ECO:0007669"/>
    <property type="project" value="UniProtKB-UniRule"/>
</dbReference>
<dbReference type="FunFam" id="1.10.150.170:FF:000001">
    <property type="entry name" value="Ribosomal RNA small subunit methyltransferase H"/>
    <property type="match status" value="1"/>
</dbReference>
<dbReference type="Gene3D" id="1.10.150.170">
    <property type="entry name" value="Putative methyltransferase TM0872, insert domain"/>
    <property type="match status" value="1"/>
</dbReference>
<dbReference type="Gene3D" id="3.40.50.150">
    <property type="entry name" value="Vaccinia Virus protein VP39"/>
    <property type="match status" value="1"/>
</dbReference>
<dbReference type="HAMAP" id="MF_01007">
    <property type="entry name" value="16SrRNA_methyltr_H"/>
    <property type="match status" value="1"/>
</dbReference>
<dbReference type="InterPro" id="IPR002903">
    <property type="entry name" value="RsmH"/>
</dbReference>
<dbReference type="InterPro" id="IPR023397">
    <property type="entry name" value="SAM-dep_MeTrfase_MraW_recog"/>
</dbReference>
<dbReference type="InterPro" id="IPR029063">
    <property type="entry name" value="SAM-dependent_MTases_sf"/>
</dbReference>
<dbReference type="NCBIfam" id="TIGR00006">
    <property type="entry name" value="16S rRNA (cytosine(1402)-N(4))-methyltransferase RsmH"/>
    <property type="match status" value="1"/>
</dbReference>
<dbReference type="PANTHER" id="PTHR11265:SF0">
    <property type="entry name" value="12S RRNA N4-METHYLCYTIDINE METHYLTRANSFERASE"/>
    <property type="match status" value="1"/>
</dbReference>
<dbReference type="PANTHER" id="PTHR11265">
    <property type="entry name" value="S-ADENOSYL-METHYLTRANSFERASE MRAW"/>
    <property type="match status" value="1"/>
</dbReference>
<dbReference type="Pfam" id="PF01795">
    <property type="entry name" value="Methyltransf_5"/>
    <property type="match status" value="1"/>
</dbReference>
<dbReference type="PIRSF" id="PIRSF004486">
    <property type="entry name" value="MraW"/>
    <property type="match status" value="1"/>
</dbReference>
<dbReference type="SUPFAM" id="SSF81799">
    <property type="entry name" value="Putative methyltransferase TM0872, insert domain"/>
    <property type="match status" value="1"/>
</dbReference>
<dbReference type="SUPFAM" id="SSF53335">
    <property type="entry name" value="S-adenosyl-L-methionine-dependent methyltransferases"/>
    <property type="match status" value="1"/>
</dbReference>
<comment type="function">
    <text evidence="1">Specifically methylates the N4 position of cytidine in position 1402 (C1402) of 16S rRNA.</text>
</comment>
<comment type="catalytic activity">
    <reaction evidence="1">
        <text>cytidine(1402) in 16S rRNA + S-adenosyl-L-methionine = N(4)-methylcytidine(1402) in 16S rRNA + S-adenosyl-L-homocysteine + H(+)</text>
        <dbReference type="Rhea" id="RHEA:42928"/>
        <dbReference type="Rhea" id="RHEA-COMP:10286"/>
        <dbReference type="Rhea" id="RHEA-COMP:10287"/>
        <dbReference type="ChEBI" id="CHEBI:15378"/>
        <dbReference type="ChEBI" id="CHEBI:57856"/>
        <dbReference type="ChEBI" id="CHEBI:59789"/>
        <dbReference type="ChEBI" id="CHEBI:74506"/>
        <dbReference type="ChEBI" id="CHEBI:82748"/>
        <dbReference type="EC" id="2.1.1.199"/>
    </reaction>
</comment>
<comment type="subcellular location">
    <subcellularLocation>
        <location evidence="1">Cytoplasm</location>
    </subcellularLocation>
</comment>
<comment type="similarity">
    <text evidence="1">Belongs to the methyltransferase superfamily. RsmH family.</text>
</comment>
<gene>
    <name evidence="1" type="primary">rsmH</name>
    <name type="synonym">mraW</name>
    <name type="ordered locus">CLH_2213</name>
</gene>